<name>G6PI_ROSS1</name>
<keyword id="KW-0963">Cytoplasm</keyword>
<keyword id="KW-0312">Gluconeogenesis</keyword>
<keyword id="KW-0324">Glycolysis</keyword>
<keyword id="KW-0413">Isomerase</keyword>
<protein>
    <recommendedName>
        <fullName evidence="1">Glucose-6-phosphate isomerase</fullName>
        <shortName evidence="1">GPI</shortName>
        <ecNumber evidence="1">5.3.1.9</ecNumber>
    </recommendedName>
    <alternativeName>
        <fullName evidence="1">Phosphoglucose isomerase</fullName>
        <shortName evidence="1">PGI</shortName>
    </alternativeName>
    <alternativeName>
        <fullName evidence="1">Phosphohexose isomerase</fullName>
        <shortName evidence="1">PHI</shortName>
    </alternativeName>
</protein>
<organism>
    <name type="scientific">Roseiflexus sp. (strain RS-1)</name>
    <dbReference type="NCBI Taxonomy" id="357808"/>
    <lineage>
        <taxon>Bacteria</taxon>
        <taxon>Bacillati</taxon>
        <taxon>Chloroflexota</taxon>
        <taxon>Chloroflexia</taxon>
        <taxon>Chloroflexales</taxon>
        <taxon>Roseiflexineae</taxon>
        <taxon>Roseiflexaceae</taxon>
        <taxon>Roseiflexus</taxon>
    </lineage>
</organism>
<sequence>MTVLTHRPEWRALETHYHAICNVHLRQLFAEDPGRGERLTAEAAGLFFDYAKNRITDETLRLLIALAEACDLRARIDAMFRGERINATENRAVLHVALRAPRGAVILVDGANVVPEVHAVLDRMAAFAEQVRSGRWTGFTGKPIRNIVNIGIGGSDLGPVMAYEALRYYSDRNLTVRFVSNVDGSDFAEATRDLDPAETLFIVASKTFTTLETMTNARTARAWALAALGDEAAVARHFVAVSTNAAEVAKFGIDTANMFGFWDWVGGRYSMTSAIGLSTMIALGPERFHELLAGFHAMDEHFRTAPFDRNLPVIHGLLTIWYANFFGIETVAILPYDNYLKRFPAYLQQLTMESNGKSVTLSGAPVSYQTGMIYWGEPGTNGQHSFYQLLHQGTRLALCDFIGFAEPLNPLGNHHDLLMANMFAQAEALAFGKTTEETLAEGTPEWLAPHRTFAGNRPSNTLLAERLTPATLGALVALYEHSVFTQGAIWDINPFDQWGVELGKALAGRIVPELMSESAPHLAHDSSTNALIRRYRTLRGRVS</sequence>
<accession>A5V1D8</accession>
<comment type="function">
    <text evidence="1">Catalyzes the reversible isomerization of glucose-6-phosphate to fructose-6-phosphate.</text>
</comment>
<comment type="catalytic activity">
    <reaction evidence="1">
        <text>alpha-D-glucose 6-phosphate = beta-D-fructose 6-phosphate</text>
        <dbReference type="Rhea" id="RHEA:11816"/>
        <dbReference type="ChEBI" id="CHEBI:57634"/>
        <dbReference type="ChEBI" id="CHEBI:58225"/>
        <dbReference type="EC" id="5.3.1.9"/>
    </reaction>
</comment>
<comment type="pathway">
    <text evidence="1">Carbohydrate biosynthesis; gluconeogenesis.</text>
</comment>
<comment type="pathway">
    <text evidence="1">Carbohydrate degradation; glycolysis; D-glyceraldehyde 3-phosphate and glycerone phosphate from D-glucose: step 2/4.</text>
</comment>
<comment type="subcellular location">
    <subcellularLocation>
        <location evidence="1">Cytoplasm</location>
    </subcellularLocation>
</comment>
<comment type="similarity">
    <text evidence="1">Belongs to the GPI family.</text>
</comment>
<gene>
    <name evidence="1" type="primary">pgi</name>
    <name type="ordered locus">RoseRS_4356</name>
</gene>
<proteinExistence type="inferred from homology"/>
<reference key="1">
    <citation type="submission" date="2007-04" db="EMBL/GenBank/DDBJ databases">
        <title>Complete sequence of Roseiflexus sp. RS-1.</title>
        <authorList>
            <consortium name="US DOE Joint Genome Institute"/>
            <person name="Copeland A."/>
            <person name="Lucas S."/>
            <person name="Lapidus A."/>
            <person name="Barry K."/>
            <person name="Detter J.C."/>
            <person name="Glavina del Rio T."/>
            <person name="Hammon N."/>
            <person name="Israni S."/>
            <person name="Dalin E."/>
            <person name="Tice H."/>
            <person name="Pitluck S."/>
            <person name="Chertkov O."/>
            <person name="Brettin T."/>
            <person name="Bruce D."/>
            <person name="Han C."/>
            <person name="Schmutz J."/>
            <person name="Larimer F."/>
            <person name="Land M."/>
            <person name="Hauser L."/>
            <person name="Kyrpides N."/>
            <person name="Mikhailova N."/>
            <person name="Bryant D.A."/>
            <person name="Richardson P."/>
        </authorList>
    </citation>
    <scope>NUCLEOTIDE SEQUENCE [LARGE SCALE GENOMIC DNA]</scope>
    <source>
        <strain>RS-1</strain>
    </source>
</reference>
<dbReference type="EC" id="5.3.1.9" evidence="1"/>
<dbReference type="EMBL" id="CP000686">
    <property type="protein sequence ID" value="ABQ92691.1"/>
    <property type="molecule type" value="Genomic_DNA"/>
</dbReference>
<dbReference type="RefSeq" id="WP_011959028.1">
    <property type="nucleotide sequence ID" value="NC_009523.1"/>
</dbReference>
<dbReference type="SMR" id="A5V1D8"/>
<dbReference type="STRING" id="357808.RoseRS_4356"/>
<dbReference type="KEGG" id="rrs:RoseRS_4356"/>
<dbReference type="eggNOG" id="COG0166">
    <property type="taxonomic scope" value="Bacteria"/>
</dbReference>
<dbReference type="HOGENOM" id="CLU_017947_3_1_0"/>
<dbReference type="OrthoDB" id="140919at2"/>
<dbReference type="UniPathway" id="UPA00109">
    <property type="reaction ID" value="UER00181"/>
</dbReference>
<dbReference type="UniPathway" id="UPA00138"/>
<dbReference type="Proteomes" id="UP000006554">
    <property type="component" value="Chromosome"/>
</dbReference>
<dbReference type="GO" id="GO:0005829">
    <property type="term" value="C:cytosol"/>
    <property type="evidence" value="ECO:0007669"/>
    <property type="project" value="TreeGrafter"/>
</dbReference>
<dbReference type="GO" id="GO:0097367">
    <property type="term" value="F:carbohydrate derivative binding"/>
    <property type="evidence" value="ECO:0007669"/>
    <property type="project" value="InterPro"/>
</dbReference>
<dbReference type="GO" id="GO:0004347">
    <property type="term" value="F:glucose-6-phosphate isomerase activity"/>
    <property type="evidence" value="ECO:0007669"/>
    <property type="project" value="UniProtKB-UniRule"/>
</dbReference>
<dbReference type="GO" id="GO:0048029">
    <property type="term" value="F:monosaccharide binding"/>
    <property type="evidence" value="ECO:0007669"/>
    <property type="project" value="TreeGrafter"/>
</dbReference>
<dbReference type="GO" id="GO:0006094">
    <property type="term" value="P:gluconeogenesis"/>
    <property type="evidence" value="ECO:0007669"/>
    <property type="project" value="UniProtKB-UniRule"/>
</dbReference>
<dbReference type="GO" id="GO:0051156">
    <property type="term" value="P:glucose 6-phosphate metabolic process"/>
    <property type="evidence" value="ECO:0007669"/>
    <property type="project" value="TreeGrafter"/>
</dbReference>
<dbReference type="GO" id="GO:0006096">
    <property type="term" value="P:glycolytic process"/>
    <property type="evidence" value="ECO:0007669"/>
    <property type="project" value="UniProtKB-UniRule"/>
</dbReference>
<dbReference type="CDD" id="cd05015">
    <property type="entry name" value="SIS_PGI_1"/>
    <property type="match status" value="1"/>
</dbReference>
<dbReference type="CDD" id="cd05016">
    <property type="entry name" value="SIS_PGI_2"/>
    <property type="match status" value="1"/>
</dbReference>
<dbReference type="FunFam" id="1.10.1390.10:FF:000001">
    <property type="entry name" value="Glucose-6-phosphate isomerase"/>
    <property type="match status" value="1"/>
</dbReference>
<dbReference type="FunFam" id="3.40.50.10490:FF:000018">
    <property type="entry name" value="Glucose-6-phosphate isomerase"/>
    <property type="match status" value="1"/>
</dbReference>
<dbReference type="Gene3D" id="1.10.1390.10">
    <property type="match status" value="1"/>
</dbReference>
<dbReference type="Gene3D" id="3.40.50.10490">
    <property type="entry name" value="Glucose-6-phosphate isomerase like protein, domain 1"/>
    <property type="match status" value="2"/>
</dbReference>
<dbReference type="HAMAP" id="MF_00473">
    <property type="entry name" value="G6P_isomerase"/>
    <property type="match status" value="1"/>
</dbReference>
<dbReference type="InterPro" id="IPR001672">
    <property type="entry name" value="G6P_Isomerase"/>
</dbReference>
<dbReference type="InterPro" id="IPR023096">
    <property type="entry name" value="G6P_Isomerase_C"/>
</dbReference>
<dbReference type="InterPro" id="IPR018189">
    <property type="entry name" value="Phosphoglucose_isomerase_CS"/>
</dbReference>
<dbReference type="InterPro" id="IPR046348">
    <property type="entry name" value="SIS_dom_sf"/>
</dbReference>
<dbReference type="InterPro" id="IPR035476">
    <property type="entry name" value="SIS_PGI_1"/>
</dbReference>
<dbReference type="InterPro" id="IPR035482">
    <property type="entry name" value="SIS_PGI_2"/>
</dbReference>
<dbReference type="NCBIfam" id="NF001211">
    <property type="entry name" value="PRK00179.1"/>
    <property type="match status" value="1"/>
</dbReference>
<dbReference type="PANTHER" id="PTHR11469">
    <property type="entry name" value="GLUCOSE-6-PHOSPHATE ISOMERASE"/>
    <property type="match status" value="1"/>
</dbReference>
<dbReference type="PANTHER" id="PTHR11469:SF1">
    <property type="entry name" value="GLUCOSE-6-PHOSPHATE ISOMERASE"/>
    <property type="match status" value="1"/>
</dbReference>
<dbReference type="Pfam" id="PF00342">
    <property type="entry name" value="PGI"/>
    <property type="match status" value="1"/>
</dbReference>
<dbReference type="PRINTS" id="PR00662">
    <property type="entry name" value="G6PISOMERASE"/>
</dbReference>
<dbReference type="SUPFAM" id="SSF53697">
    <property type="entry name" value="SIS domain"/>
    <property type="match status" value="1"/>
</dbReference>
<dbReference type="PROSITE" id="PS00765">
    <property type="entry name" value="P_GLUCOSE_ISOMERASE_1"/>
    <property type="match status" value="1"/>
</dbReference>
<dbReference type="PROSITE" id="PS00174">
    <property type="entry name" value="P_GLUCOSE_ISOMERASE_2"/>
    <property type="match status" value="1"/>
</dbReference>
<dbReference type="PROSITE" id="PS51463">
    <property type="entry name" value="P_GLUCOSE_ISOMERASE_3"/>
    <property type="match status" value="1"/>
</dbReference>
<evidence type="ECO:0000255" key="1">
    <source>
        <dbReference type="HAMAP-Rule" id="MF_00473"/>
    </source>
</evidence>
<feature type="chain" id="PRO_1000206372" description="Glucose-6-phosphate isomerase">
    <location>
        <begin position="1"/>
        <end position="543"/>
    </location>
</feature>
<feature type="active site" description="Proton donor" evidence="1">
    <location>
        <position position="353"/>
    </location>
</feature>
<feature type="active site" evidence="1">
    <location>
        <position position="384"/>
    </location>
</feature>
<feature type="active site" evidence="1">
    <location>
        <position position="504"/>
    </location>
</feature>